<comment type="function">
    <text evidence="1">Catalyzes the interconversion of methylthioribose-1-phosphate (MTR-1-P) into methylthioribulose-1-phosphate (MTRu-1-P).</text>
</comment>
<comment type="catalytic activity">
    <reaction evidence="1">
        <text>5-(methylsulfanyl)-alpha-D-ribose 1-phosphate = 5-(methylsulfanyl)-D-ribulose 1-phosphate</text>
        <dbReference type="Rhea" id="RHEA:19989"/>
        <dbReference type="ChEBI" id="CHEBI:58533"/>
        <dbReference type="ChEBI" id="CHEBI:58548"/>
        <dbReference type="EC" id="5.3.1.23"/>
    </reaction>
</comment>
<comment type="pathway">
    <text evidence="1">Amino-acid biosynthesis; L-methionine biosynthesis via salvage pathway; L-methionine from S-methyl-5-thio-alpha-D-ribose 1-phosphate: step 1/6.</text>
</comment>
<comment type="similarity">
    <text evidence="2">Belongs to the eIF-2B alpha/beta/delta subunits family. MtnA subfamily.</text>
</comment>
<feature type="chain" id="PRO_1000187372" description="Methylthioribose-1-phosphate isomerase">
    <location>
        <begin position="1"/>
        <end position="348"/>
    </location>
</feature>
<feature type="active site" description="Proton donor" evidence="1">
    <location>
        <position position="240"/>
    </location>
</feature>
<feature type="binding site" evidence="1">
    <location>
        <begin position="54"/>
        <end position="56"/>
    </location>
    <ligand>
        <name>substrate</name>
    </ligand>
</feature>
<feature type="binding site" evidence="1">
    <location>
        <position position="96"/>
    </location>
    <ligand>
        <name>substrate</name>
    </ligand>
</feature>
<feature type="binding site" evidence="1">
    <location>
        <position position="199"/>
    </location>
    <ligand>
        <name>substrate</name>
    </ligand>
</feature>
<feature type="binding site" evidence="1">
    <location>
        <begin position="250"/>
        <end position="251"/>
    </location>
    <ligand>
        <name>substrate</name>
    </ligand>
</feature>
<feature type="site" description="Transition state stabilizer" evidence="1">
    <location>
        <position position="160"/>
    </location>
</feature>
<gene>
    <name evidence="1" type="primary">mtnA</name>
    <name type="ordered locus">Tgr7_1534</name>
</gene>
<organism>
    <name type="scientific">Thioalkalivibrio sulfidiphilus (strain HL-EbGR7)</name>
    <dbReference type="NCBI Taxonomy" id="396588"/>
    <lineage>
        <taxon>Bacteria</taxon>
        <taxon>Pseudomonadati</taxon>
        <taxon>Pseudomonadota</taxon>
        <taxon>Gammaproteobacteria</taxon>
        <taxon>Chromatiales</taxon>
        <taxon>Ectothiorhodospiraceae</taxon>
        <taxon>Thioalkalivibrio</taxon>
    </lineage>
</organism>
<accession>B8GRR4</accession>
<dbReference type="EC" id="5.3.1.23" evidence="1"/>
<dbReference type="EMBL" id="CP001339">
    <property type="protein sequence ID" value="ACL72618.1"/>
    <property type="molecule type" value="Genomic_DNA"/>
</dbReference>
<dbReference type="RefSeq" id="WP_012638101.1">
    <property type="nucleotide sequence ID" value="NC_011901.1"/>
</dbReference>
<dbReference type="SMR" id="B8GRR4"/>
<dbReference type="STRING" id="396588.Tgr7_1534"/>
<dbReference type="KEGG" id="tgr:Tgr7_1534"/>
<dbReference type="eggNOG" id="COG0182">
    <property type="taxonomic scope" value="Bacteria"/>
</dbReference>
<dbReference type="HOGENOM" id="CLU_016218_1_2_6"/>
<dbReference type="OrthoDB" id="9803436at2"/>
<dbReference type="UniPathway" id="UPA00904">
    <property type="reaction ID" value="UER00874"/>
</dbReference>
<dbReference type="Proteomes" id="UP000002383">
    <property type="component" value="Chromosome"/>
</dbReference>
<dbReference type="GO" id="GO:0046523">
    <property type="term" value="F:S-methyl-5-thioribose-1-phosphate isomerase activity"/>
    <property type="evidence" value="ECO:0007669"/>
    <property type="project" value="UniProtKB-UniRule"/>
</dbReference>
<dbReference type="GO" id="GO:0019509">
    <property type="term" value="P:L-methionine salvage from methylthioadenosine"/>
    <property type="evidence" value="ECO:0007669"/>
    <property type="project" value="UniProtKB-UniRule"/>
</dbReference>
<dbReference type="FunFam" id="1.20.120.420:FF:000003">
    <property type="entry name" value="Methylthioribose-1-phosphate isomerase"/>
    <property type="match status" value="1"/>
</dbReference>
<dbReference type="FunFam" id="3.40.50.10470:FF:000006">
    <property type="entry name" value="Methylthioribose-1-phosphate isomerase"/>
    <property type="match status" value="1"/>
</dbReference>
<dbReference type="Gene3D" id="1.20.120.420">
    <property type="entry name" value="translation initiation factor eif-2b, domain 1"/>
    <property type="match status" value="1"/>
</dbReference>
<dbReference type="Gene3D" id="3.40.50.10470">
    <property type="entry name" value="Translation initiation factor eif-2b, domain 2"/>
    <property type="match status" value="1"/>
</dbReference>
<dbReference type="HAMAP" id="MF_01678">
    <property type="entry name" value="Salvage_MtnA"/>
    <property type="match status" value="1"/>
</dbReference>
<dbReference type="InterPro" id="IPR000649">
    <property type="entry name" value="IF-2B-related"/>
</dbReference>
<dbReference type="InterPro" id="IPR005251">
    <property type="entry name" value="IF-M1Pi"/>
</dbReference>
<dbReference type="InterPro" id="IPR042529">
    <property type="entry name" value="IF_2B-like_C"/>
</dbReference>
<dbReference type="InterPro" id="IPR011559">
    <property type="entry name" value="Initiation_fac_2B_a/b/d"/>
</dbReference>
<dbReference type="InterPro" id="IPR027363">
    <property type="entry name" value="M1Pi_N"/>
</dbReference>
<dbReference type="InterPro" id="IPR037171">
    <property type="entry name" value="NagB/RpiA_transferase-like"/>
</dbReference>
<dbReference type="NCBIfam" id="TIGR00524">
    <property type="entry name" value="eIF-2B_rel"/>
    <property type="match status" value="1"/>
</dbReference>
<dbReference type="NCBIfam" id="NF004326">
    <property type="entry name" value="PRK05720.1"/>
    <property type="match status" value="1"/>
</dbReference>
<dbReference type="NCBIfam" id="TIGR00512">
    <property type="entry name" value="salvage_mtnA"/>
    <property type="match status" value="1"/>
</dbReference>
<dbReference type="PANTHER" id="PTHR43475">
    <property type="entry name" value="METHYLTHIORIBOSE-1-PHOSPHATE ISOMERASE"/>
    <property type="match status" value="1"/>
</dbReference>
<dbReference type="PANTHER" id="PTHR43475:SF1">
    <property type="entry name" value="METHYLTHIORIBOSE-1-PHOSPHATE ISOMERASE"/>
    <property type="match status" value="1"/>
</dbReference>
<dbReference type="Pfam" id="PF01008">
    <property type="entry name" value="IF-2B"/>
    <property type="match status" value="1"/>
</dbReference>
<dbReference type="SUPFAM" id="SSF100950">
    <property type="entry name" value="NagB/RpiA/CoA transferase-like"/>
    <property type="match status" value="1"/>
</dbReference>
<sequence length="348" mass="37039">MKPTDLAFDTVRAVLWDGTSLKLLDQRRLPRETVYLDIPDVGAAADAIREMVVRGAPAIGITAAYGVVLAARRLPADTPDWLDALTPDLERLAASRPTAVNLFWALARMKSVIGQVGADLPARLEAEARRIHEDDLADNRRMGELGAALMDPAEAVLTHCNTGSLATGGYGTALGVIRSAYGQQRIKKVYADETRPWLQGARLTAWELVQDGIPVDLICEGAAASLMRSGRVGWVVVGADRIAANGDTANKIGTYALAVLARHHGVRFMVVAPTSTIDMDTPDGAGIPIEERPVSEVLGLAGQPVAAEGAGAWNPAFDVTPAELIDAIVTEKGVVERPDRAKMTALMK</sequence>
<name>MTNA_THISH</name>
<protein>
    <recommendedName>
        <fullName evidence="1">Methylthioribose-1-phosphate isomerase</fullName>
        <shortName evidence="1">M1Pi</shortName>
        <shortName evidence="1">MTR-1-P isomerase</shortName>
        <ecNumber evidence="1">5.3.1.23</ecNumber>
    </recommendedName>
    <alternativeName>
        <fullName evidence="1">S-methyl-5-thioribose-1-phosphate isomerase</fullName>
    </alternativeName>
</protein>
<keyword id="KW-0028">Amino-acid biosynthesis</keyword>
<keyword id="KW-0413">Isomerase</keyword>
<keyword id="KW-0486">Methionine biosynthesis</keyword>
<keyword id="KW-1185">Reference proteome</keyword>
<evidence type="ECO:0000255" key="1">
    <source>
        <dbReference type="HAMAP-Rule" id="MF_01678"/>
    </source>
</evidence>
<evidence type="ECO:0000305" key="2"/>
<reference key="1">
    <citation type="journal article" date="2011" name="Stand. Genomic Sci.">
        <title>Complete genome sequence of 'Thioalkalivibrio sulfidophilus' HL-EbGr7.</title>
        <authorList>
            <person name="Muyzer G."/>
            <person name="Sorokin D.Y."/>
            <person name="Mavromatis K."/>
            <person name="Lapidus A."/>
            <person name="Clum A."/>
            <person name="Ivanova N."/>
            <person name="Pati A."/>
            <person name="d'Haeseleer P."/>
            <person name="Woyke T."/>
            <person name="Kyrpides N.C."/>
        </authorList>
    </citation>
    <scope>NUCLEOTIDE SEQUENCE [LARGE SCALE GENOMIC DNA]</scope>
    <source>
        <strain>HL-EbGR7</strain>
    </source>
</reference>
<proteinExistence type="inferred from homology"/>